<comment type="catalytic activity">
    <reaction evidence="1">
        <text>(4aS,6R)-4a-hydroxy-L-erythro-5,6,7,8-tetrahydrobiopterin = (6R)-L-erythro-6,7-dihydrobiopterin + H2O</text>
        <dbReference type="Rhea" id="RHEA:11920"/>
        <dbReference type="ChEBI" id="CHEBI:15377"/>
        <dbReference type="ChEBI" id="CHEBI:15642"/>
        <dbReference type="ChEBI" id="CHEBI:43120"/>
        <dbReference type="EC" id="4.2.1.96"/>
    </reaction>
</comment>
<comment type="similarity">
    <text evidence="1">Belongs to the pterin-4-alpha-carbinolamine dehydratase family.</text>
</comment>
<reference key="1">
    <citation type="submission" date="2008-05" db="EMBL/GenBank/DDBJ databases">
        <title>Complete sequence of chromosome 1 of Ralstonia pickettii 12J.</title>
        <authorList>
            <person name="Lucas S."/>
            <person name="Copeland A."/>
            <person name="Lapidus A."/>
            <person name="Glavina del Rio T."/>
            <person name="Dalin E."/>
            <person name="Tice H."/>
            <person name="Bruce D."/>
            <person name="Goodwin L."/>
            <person name="Pitluck S."/>
            <person name="Meincke L."/>
            <person name="Brettin T."/>
            <person name="Detter J.C."/>
            <person name="Han C."/>
            <person name="Kuske C.R."/>
            <person name="Schmutz J."/>
            <person name="Larimer F."/>
            <person name="Land M."/>
            <person name="Hauser L."/>
            <person name="Kyrpides N."/>
            <person name="Mikhailova N."/>
            <person name="Marsh T."/>
            <person name="Richardson P."/>
        </authorList>
    </citation>
    <scope>NUCLEOTIDE SEQUENCE [LARGE SCALE GENOMIC DNA]</scope>
    <source>
        <strain>12J</strain>
    </source>
</reference>
<keyword id="KW-0456">Lyase</keyword>
<gene>
    <name type="ordered locus">Rpic_3550</name>
</gene>
<proteinExistence type="inferred from homology"/>
<name>PHS_RALPJ</name>
<feature type="chain" id="PRO_1000192929" description="Putative pterin-4-alpha-carbinolamine dehydratase">
    <location>
        <begin position="1"/>
        <end position="101"/>
    </location>
</feature>
<accession>B2UGY6</accession>
<dbReference type="EC" id="4.2.1.96" evidence="1"/>
<dbReference type="EMBL" id="CP001068">
    <property type="protein sequence ID" value="ACD28669.1"/>
    <property type="molecule type" value="Genomic_DNA"/>
</dbReference>
<dbReference type="SMR" id="B2UGY6"/>
<dbReference type="STRING" id="402626.Rpic_3550"/>
<dbReference type="KEGG" id="rpi:Rpic_3550"/>
<dbReference type="eggNOG" id="COG2154">
    <property type="taxonomic scope" value="Bacteria"/>
</dbReference>
<dbReference type="HOGENOM" id="CLU_081974_3_2_4"/>
<dbReference type="GO" id="GO:0008124">
    <property type="term" value="F:4-alpha-hydroxytetrahydrobiopterin dehydratase activity"/>
    <property type="evidence" value="ECO:0007669"/>
    <property type="project" value="UniProtKB-UniRule"/>
</dbReference>
<dbReference type="GO" id="GO:0006729">
    <property type="term" value="P:tetrahydrobiopterin biosynthetic process"/>
    <property type="evidence" value="ECO:0007669"/>
    <property type="project" value="InterPro"/>
</dbReference>
<dbReference type="CDD" id="cd00914">
    <property type="entry name" value="PCD_DCoH_subfamily_b"/>
    <property type="match status" value="1"/>
</dbReference>
<dbReference type="Gene3D" id="3.30.1360.20">
    <property type="entry name" value="Transcriptional coactivator/pterin dehydratase"/>
    <property type="match status" value="1"/>
</dbReference>
<dbReference type="HAMAP" id="MF_00434">
    <property type="entry name" value="Pterin_4_alpha"/>
    <property type="match status" value="1"/>
</dbReference>
<dbReference type="InterPro" id="IPR036428">
    <property type="entry name" value="PCD_sf"/>
</dbReference>
<dbReference type="InterPro" id="IPR001533">
    <property type="entry name" value="Pterin_deHydtase"/>
</dbReference>
<dbReference type="NCBIfam" id="NF002018">
    <property type="entry name" value="PRK00823.1-3"/>
    <property type="match status" value="1"/>
</dbReference>
<dbReference type="NCBIfam" id="NF002020">
    <property type="entry name" value="PRK00823.1-5"/>
    <property type="match status" value="1"/>
</dbReference>
<dbReference type="PANTHER" id="PTHR12599">
    <property type="entry name" value="PTERIN-4-ALPHA-CARBINOLAMINE DEHYDRATASE"/>
    <property type="match status" value="1"/>
</dbReference>
<dbReference type="PANTHER" id="PTHR12599:SF0">
    <property type="entry name" value="PTERIN-4-ALPHA-CARBINOLAMINE DEHYDRATASE"/>
    <property type="match status" value="1"/>
</dbReference>
<dbReference type="Pfam" id="PF01329">
    <property type="entry name" value="Pterin_4a"/>
    <property type="match status" value="1"/>
</dbReference>
<dbReference type="SUPFAM" id="SSF55248">
    <property type="entry name" value="PCD-like"/>
    <property type="match status" value="1"/>
</dbReference>
<protein>
    <recommendedName>
        <fullName evidence="1">Putative pterin-4-alpha-carbinolamine dehydratase</fullName>
        <shortName evidence="1">PHS</shortName>
        <ecNumber evidence="1">4.2.1.96</ecNumber>
    </recommendedName>
    <alternativeName>
        <fullName evidence="1">4-alpha-hydroxy-tetrahydropterin dehydratase</fullName>
    </alternativeName>
    <alternativeName>
        <fullName evidence="1">Pterin carbinolamine dehydratase</fullName>
        <shortName evidence="1">PCD</shortName>
    </alternativeName>
</protein>
<organism>
    <name type="scientific">Ralstonia pickettii (strain 12J)</name>
    <dbReference type="NCBI Taxonomy" id="402626"/>
    <lineage>
        <taxon>Bacteria</taxon>
        <taxon>Pseudomonadati</taxon>
        <taxon>Pseudomonadota</taxon>
        <taxon>Betaproteobacteria</taxon>
        <taxon>Burkholderiales</taxon>
        <taxon>Burkholderiaceae</taxon>
        <taxon>Ralstonia</taxon>
    </lineage>
</organism>
<sequence>MMPTLNEDQRKALFAEVPGWTLQSERDAIQKTFTFADFNAAFGFMTRVAIKAEQMNHHPEWFNVWNRVDITLSTHDANGLTHRDADLARFIEQAAKGTGAK</sequence>
<evidence type="ECO:0000255" key="1">
    <source>
        <dbReference type="HAMAP-Rule" id="MF_00434"/>
    </source>
</evidence>